<name>GATF_KLULA</name>
<proteinExistence type="inferred from homology"/>
<keyword id="KW-0067">ATP-binding</keyword>
<keyword id="KW-0436">Ligase</keyword>
<keyword id="KW-0472">Membrane</keyword>
<keyword id="KW-0496">Mitochondrion</keyword>
<keyword id="KW-0999">Mitochondrion inner membrane</keyword>
<keyword id="KW-0547">Nucleotide-binding</keyword>
<keyword id="KW-0648">Protein biosynthesis</keyword>
<keyword id="KW-1185">Reference proteome</keyword>
<feature type="chain" id="PRO_0000413402" description="Glutamyl-tRNA(Gln) amidotransferase subunit F, mitochondrial">
    <location>
        <begin position="1"/>
        <end position="174"/>
    </location>
</feature>
<evidence type="ECO:0000255" key="1">
    <source>
        <dbReference type="HAMAP-Rule" id="MF_03151"/>
    </source>
</evidence>
<gene>
    <name evidence="1" type="primary">GTF1</name>
    <name type="ordered locus">KLLA0D15246g</name>
</gene>
<accession>Q6CQQ2</accession>
<sequence>MLLALRRKAIHGIRFSSGKCGQNLSGSTIGPKFTSDKEVEEFLSKSTWDVREYVPSSVDEKLIPSEETVVRLLKISGLPIKNIDQIQIRLANQLSFINRLHNLPVDENINPNHARIIERNPTPLDYEGLIKGIASQQKSDSLGEISGSWDPTKTAAVKRDGFFILREGLLKGRD</sequence>
<reference key="1">
    <citation type="journal article" date="2004" name="Nature">
        <title>Genome evolution in yeasts.</title>
        <authorList>
            <person name="Dujon B."/>
            <person name="Sherman D."/>
            <person name="Fischer G."/>
            <person name="Durrens P."/>
            <person name="Casaregola S."/>
            <person name="Lafontaine I."/>
            <person name="de Montigny J."/>
            <person name="Marck C."/>
            <person name="Neuveglise C."/>
            <person name="Talla E."/>
            <person name="Goffard N."/>
            <person name="Frangeul L."/>
            <person name="Aigle M."/>
            <person name="Anthouard V."/>
            <person name="Babour A."/>
            <person name="Barbe V."/>
            <person name="Barnay S."/>
            <person name="Blanchin S."/>
            <person name="Beckerich J.-M."/>
            <person name="Beyne E."/>
            <person name="Bleykasten C."/>
            <person name="Boisrame A."/>
            <person name="Boyer J."/>
            <person name="Cattolico L."/>
            <person name="Confanioleri F."/>
            <person name="de Daruvar A."/>
            <person name="Despons L."/>
            <person name="Fabre E."/>
            <person name="Fairhead C."/>
            <person name="Ferry-Dumazet H."/>
            <person name="Groppi A."/>
            <person name="Hantraye F."/>
            <person name="Hennequin C."/>
            <person name="Jauniaux N."/>
            <person name="Joyet P."/>
            <person name="Kachouri R."/>
            <person name="Kerrest A."/>
            <person name="Koszul R."/>
            <person name="Lemaire M."/>
            <person name="Lesur I."/>
            <person name="Ma L."/>
            <person name="Muller H."/>
            <person name="Nicaud J.-M."/>
            <person name="Nikolski M."/>
            <person name="Oztas S."/>
            <person name="Ozier-Kalogeropoulos O."/>
            <person name="Pellenz S."/>
            <person name="Potier S."/>
            <person name="Richard G.-F."/>
            <person name="Straub M.-L."/>
            <person name="Suleau A."/>
            <person name="Swennen D."/>
            <person name="Tekaia F."/>
            <person name="Wesolowski-Louvel M."/>
            <person name="Westhof E."/>
            <person name="Wirth B."/>
            <person name="Zeniou-Meyer M."/>
            <person name="Zivanovic Y."/>
            <person name="Bolotin-Fukuhara M."/>
            <person name="Thierry A."/>
            <person name="Bouchier C."/>
            <person name="Caudron B."/>
            <person name="Scarpelli C."/>
            <person name="Gaillardin C."/>
            <person name="Weissenbach J."/>
            <person name="Wincker P."/>
            <person name="Souciet J.-L."/>
        </authorList>
    </citation>
    <scope>NUCLEOTIDE SEQUENCE [LARGE SCALE GENOMIC DNA]</scope>
    <source>
        <strain>ATCC 8585 / CBS 2359 / DSM 70799 / NBRC 1267 / NRRL Y-1140 / WM37</strain>
    </source>
</reference>
<comment type="function">
    <text evidence="1">Allows the formation of correctly charged Gln-tRNA(Gln) through the transamidation of misacylated Glu-tRNA(Gln) in the mitochondria. The reaction takes place in the presence of glutamine and ATP through an activated gamma-phospho-Glu-tRNA(Gln). Required for proper protein synthesis within the mitochondrion.</text>
</comment>
<comment type="catalytic activity">
    <reaction evidence="1">
        <text>L-glutamyl-tRNA(Gln) + L-glutamine + ATP + H2O = L-glutaminyl-tRNA(Gln) + L-glutamate + ADP + phosphate + H(+)</text>
        <dbReference type="Rhea" id="RHEA:17521"/>
        <dbReference type="Rhea" id="RHEA-COMP:9681"/>
        <dbReference type="Rhea" id="RHEA-COMP:9684"/>
        <dbReference type="ChEBI" id="CHEBI:15377"/>
        <dbReference type="ChEBI" id="CHEBI:15378"/>
        <dbReference type="ChEBI" id="CHEBI:29985"/>
        <dbReference type="ChEBI" id="CHEBI:30616"/>
        <dbReference type="ChEBI" id="CHEBI:43474"/>
        <dbReference type="ChEBI" id="CHEBI:58359"/>
        <dbReference type="ChEBI" id="CHEBI:78520"/>
        <dbReference type="ChEBI" id="CHEBI:78521"/>
        <dbReference type="ChEBI" id="CHEBI:456216"/>
    </reaction>
</comment>
<comment type="subunit">
    <text evidence="1">Subunit of the heterotrimeric GatFAB amidotransferase (AdT) complex, composed of A, B and F subunits.</text>
</comment>
<comment type="subcellular location">
    <subcellularLocation>
        <location evidence="1">Mitochondrion inner membrane</location>
        <topology evidence="1">Peripheral membrane protein</topology>
        <orientation evidence="1">Matrix side</orientation>
    </subcellularLocation>
</comment>
<comment type="miscellaneous">
    <text evidence="1">This protein may be expected to contain an N-terminal transit peptide but none has been predicted.</text>
</comment>
<comment type="similarity">
    <text evidence="1">Belongs to the GatF family.</text>
</comment>
<dbReference type="EC" id="6.3.5.-" evidence="1"/>
<dbReference type="EMBL" id="CR382124">
    <property type="protein sequence ID" value="CAH00833.1"/>
    <property type="molecule type" value="Genomic_DNA"/>
</dbReference>
<dbReference type="RefSeq" id="XP_453737.1">
    <property type="nucleotide sequence ID" value="XM_453737.1"/>
</dbReference>
<dbReference type="SMR" id="Q6CQQ2"/>
<dbReference type="FunCoup" id="Q6CQQ2">
    <property type="interactions" value="87"/>
</dbReference>
<dbReference type="STRING" id="284590.Q6CQQ2"/>
<dbReference type="PaxDb" id="284590-Q6CQQ2"/>
<dbReference type="KEGG" id="kla:KLLA0_D15246g"/>
<dbReference type="eggNOG" id="ENOG502S3RS">
    <property type="taxonomic scope" value="Eukaryota"/>
</dbReference>
<dbReference type="HOGENOM" id="CLU_120617_0_0_1"/>
<dbReference type="InParanoid" id="Q6CQQ2"/>
<dbReference type="OMA" id="WRLCRTH"/>
<dbReference type="Proteomes" id="UP000000598">
    <property type="component" value="Chromosome D"/>
</dbReference>
<dbReference type="GO" id="GO:0030956">
    <property type="term" value="C:glutamyl-tRNA(Gln) amidotransferase complex"/>
    <property type="evidence" value="ECO:0007669"/>
    <property type="project" value="UniProtKB-UniRule"/>
</dbReference>
<dbReference type="GO" id="GO:0005743">
    <property type="term" value="C:mitochondrial inner membrane"/>
    <property type="evidence" value="ECO:0007669"/>
    <property type="project" value="UniProtKB-SubCell"/>
</dbReference>
<dbReference type="GO" id="GO:0005524">
    <property type="term" value="F:ATP binding"/>
    <property type="evidence" value="ECO:0007669"/>
    <property type="project" value="UniProtKB-KW"/>
</dbReference>
<dbReference type="GO" id="GO:0050567">
    <property type="term" value="F:glutaminyl-tRNA synthase (glutamine-hydrolyzing) activity"/>
    <property type="evidence" value="ECO:0007669"/>
    <property type="project" value="UniProtKB-UniRule"/>
</dbReference>
<dbReference type="GO" id="GO:0070681">
    <property type="term" value="P:glutaminyl-tRNAGln biosynthesis via transamidation"/>
    <property type="evidence" value="ECO:0007669"/>
    <property type="project" value="UniProtKB-UniRule"/>
</dbReference>
<dbReference type="GO" id="GO:0032543">
    <property type="term" value="P:mitochondrial translation"/>
    <property type="evidence" value="ECO:0007669"/>
    <property type="project" value="UniProtKB-UniRule"/>
</dbReference>
<dbReference type="CDD" id="cd21422">
    <property type="entry name" value="GatF"/>
    <property type="match status" value="1"/>
</dbReference>
<dbReference type="HAMAP" id="MF_03151">
    <property type="entry name" value="GatF"/>
    <property type="match status" value="1"/>
</dbReference>
<dbReference type="InterPro" id="IPR027499">
    <property type="entry name" value="GatF"/>
</dbReference>
<dbReference type="Pfam" id="PF20977">
    <property type="entry name" value="GatF"/>
    <property type="match status" value="1"/>
</dbReference>
<protein>
    <recommendedName>
        <fullName evidence="1">Glutamyl-tRNA(Gln) amidotransferase subunit F, mitochondrial</fullName>
        <shortName evidence="1">Glu-AdT subunit F</shortName>
        <ecNumber evidence="1">6.3.5.-</ecNumber>
    </recommendedName>
</protein>
<organism>
    <name type="scientific">Kluyveromyces lactis (strain ATCC 8585 / CBS 2359 / DSM 70799 / NBRC 1267 / NRRL Y-1140 / WM37)</name>
    <name type="common">Yeast</name>
    <name type="synonym">Candida sphaerica</name>
    <dbReference type="NCBI Taxonomy" id="284590"/>
    <lineage>
        <taxon>Eukaryota</taxon>
        <taxon>Fungi</taxon>
        <taxon>Dikarya</taxon>
        <taxon>Ascomycota</taxon>
        <taxon>Saccharomycotina</taxon>
        <taxon>Saccharomycetes</taxon>
        <taxon>Saccharomycetales</taxon>
        <taxon>Saccharomycetaceae</taxon>
        <taxon>Kluyveromyces</taxon>
    </lineage>
</organism>